<feature type="chain" id="PRO_0000146570" description="Small ribosomal subunit protein uS10">
    <location>
        <begin position="1"/>
        <end position="103"/>
    </location>
</feature>
<gene>
    <name evidence="1" type="primary">rpsJ</name>
    <name type="ordered locus">plu4727</name>
</gene>
<accession>P67903</accession>
<accession>O68928</accession>
<accession>P44378</accession>
<accession>Q9CL31</accession>
<dbReference type="EMBL" id="BX571874">
    <property type="protein sequence ID" value="CAE17099.1"/>
    <property type="molecule type" value="Genomic_DNA"/>
</dbReference>
<dbReference type="RefSeq" id="WP_001181005.1">
    <property type="nucleotide sequence ID" value="NC_005126.1"/>
</dbReference>
<dbReference type="SMR" id="P67903"/>
<dbReference type="STRING" id="243265.plu4727"/>
<dbReference type="GeneID" id="98390443"/>
<dbReference type="KEGG" id="plu:plu4727"/>
<dbReference type="eggNOG" id="COG0051">
    <property type="taxonomic scope" value="Bacteria"/>
</dbReference>
<dbReference type="HOGENOM" id="CLU_122625_1_3_6"/>
<dbReference type="OrthoDB" id="9804464at2"/>
<dbReference type="Proteomes" id="UP000002514">
    <property type="component" value="Chromosome"/>
</dbReference>
<dbReference type="GO" id="GO:1990904">
    <property type="term" value="C:ribonucleoprotein complex"/>
    <property type="evidence" value="ECO:0007669"/>
    <property type="project" value="UniProtKB-KW"/>
</dbReference>
<dbReference type="GO" id="GO:0005840">
    <property type="term" value="C:ribosome"/>
    <property type="evidence" value="ECO:0007669"/>
    <property type="project" value="UniProtKB-KW"/>
</dbReference>
<dbReference type="GO" id="GO:0003735">
    <property type="term" value="F:structural constituent of ribosome"/>
    <property type="evidence" value="ECO:0007669"/>
    <property type="project" value="InterPro"/>
</dbReference>
<dbReference type="GO" id="GO:0000049">
    <property type="term" value="F:tRNA binding"/>
    <property type="evidence" value="ECO:0007669"/>
    <property type="project" value="UniProtKB-UniRule"/>
</dbReference>
<dbReference type="GO" id="GO:0006412">
    <property type="term" value="P:translation"/>
    <property type="evidence" value="ECO:0007669"/>
    <property type="project" value="UniProtKB-UniRule"/>
</dbReference>
<dbReference type="FunFam" id="3.30.70.600:FF:000001">
    <property type="entry name" value="30S ribosomal protein S10"/>
    <property type="match status" value="1"/>
</dbReference>
<dbReference type="Gene3D" id="3.30.70.600">
    <property type="entry name" value="Ribosomal protein S10 domain"/>
    <property type="match status" value="1"/>
</dbReference>
<dbReference type="HAMAP" id="MF_00508">
    <property type="entry name" value="Ribosomal_uS10"/>
    <property type="match status" value="1"/>
</dbReference>
<dbReference type="InterPro" id="IPR001848">
    <property type="entry name" value="Ribosomal_uS10"/>
</dbReference>
<dbReference type="InterPro" id="IPR018268">
    <property type="entry name" value="Ribosomal_uS10_CS"/>
</dbReference>
<dbReference type="InterPro" id="IPR027486">
    <property type="entry name" value="Ribosomal_uS10_dom"/>
</dbReference>
<dbReference type="InterPro" id="IPR036838">
    <property type="entry name" value="Ribosomal_uS10_dom_sf"/>
</dbReference>
<dbReference type="NCBIfam" id="NF001861">
    <property type="entry name" value="PRK00596.1"/>
    <property type="match status" value="1"/>
</dbReference>
<dbReference type="NCBIfam" id="TIGR01049">
    <property type="entry name" value="rpsJ_bact"/>
    <property type="match status" value="1"/>
</dbReference>
<dbReference type="PANTHER" id="PTHR11700">
    <property type="entry name" value="30S RIBOSOMAL PROTEIN S10 FAMILY MEMBER"/>
    <property type="match status" value="1"/>
</dbReference>
<dbReference type="Pfam" id="PF00338">
    <property type="entry name" value="Ribosomal_S10"/>
    <property type="match status" value="1"/>
</dbReference>
<dbReference type="PRINTS" id="PR00971">
    <property type="entry name" value="RIBOSOMALS10"/>
</dbReference>
<dbReference type="SMART" id="SM01403">
    <property type="entry name" value="Ribosomal_S10"/>
    <property type="match status" value="1"/>
</dbReference>
<dbReference type="SUPFAM" id="SSF54999">
    <property type="entry name" value="Ribosomal protein S10"/>
    <property type="match status" value="1"/>
</dbReference>
<dbReference type="PROSITE" id="PS00361">
    <property type="entry name" value="RIBOSOMAL_S10"/>
    <property type="match status" value="1"/>
</dbReference>
<reference key="1">
    <citation type="journal article" date="2003" name="Nat. Biotechnol.">
        <title>The genome sequence of the entomopathogenic bacterium Photorhabdus luminescens.</title>
        <authorList>
            <person name="Duchaud E."/>
            <person name="Rusniok C."/>
            <person name="Frangeul L."/>
            <person name="Buchrieser C."/>
            <person name="Givaudan A."/>
            <person name="Taourit S."/>
            <person name="Bocs S."/>
            <person name="Boursaux-Eude C."/>
            <person name="Chandler M."/>
            <person name="Charles J.-F."/>
            <person name="Dassa E."/>
            <person name="Derose R."/>
            <person name="Derzelle S."/>
            <person name="Freyssinet G."/>
            <person name="Gaudriault S."/>
            <person name="Medigue C."/>
            <person name="Lanois A."/>
            <person name="Powell K."/>
            <person name="Siguier P."/>
            <person name="Vincent R."/>
            <person name="Wingate V."/>
            <person name="Zouine M."/>
            <person name="Glaser P."/>
            <person name="Boemare N."/>
            <person name="Danchin A."/>
            <person name="Kunst F."/>
        </authorList>
    </citation>
    <scope>NUCLEOTIDE SEQUENCE [LARGE SCALE GENOMIC DNA]</scope>
    <source>
        <strain>DSM 15139 / CIP 105565 / TT01</strain>
    </source>
</reference>
<sequence>MQNQRIRIRLKAFDHRLIDQSTAEIVETAKRTGAQVRGPIPLPTRKERFTVLISPHVNKDARDQYEIRTHKRLVDIVEPTEKTVDALMRLDLAAGVDVQISLG</sequence>
<proteinExistence type="inferred from homology"/>
<name>RS10_PHOLL</name>
<evidence type="ECO:0000255" key="1">
    <source>
        <dbReference type="HAMAP-Rule" id="MF_00508"/>
    </source>
</evidence>
<evidence type="ECO:0000305" key="2"/>
<organism>
    <name type="scientific">Photorhabdus laumondii subsp. laumondii (strain DSM 15139 / CIP 105565 / TT01)</name>
    <name type="common">Photorhabdus luminescens subsp. laumondii</name>
    <dbReference type="NCBI Taxonomy" id="243265"/>
    <lineage>
        <taxon>Bacteria</taxon>
        <taxon>Pseudomonadati</taxon>
        <taxon>Pseudomonadota</taxon>
        <taxon>Gammaproteobacteria</taxon>
        <taxon>Enterobacterales</taxon>
        <taxon>Morganellaceae</taxon>
        <taxon>Photorhabdus</taxon>
    </lineage>
</organism>
<comment type="function">
    <text evidence="1">Involved in the binding of tRNA to the ribosomes.</text>
</comment>
<comment type="subunit">
    <text evidence="1">Part of the 30S ribosomal subunit.</text>
</comment>
<comment type="similarity">
    <text evidence="1">Belongs to the universal ribosomal protein uS10 family.</text>
</comment>
<keyword id="KW-1185">Reference proteome</keyword>
<keyword id="KW-0687">Ribonucleoprotein</keyword>
<keyword id="KW-0689">Ribosomal protein</keyword>
<protein>
    <recommendedName>
        <fullName evidence="1">Small ribosomal subunit protein uS10</fullName>
    </recommendedName>
    <alternativeName>
        <fullName evidence="2">30S ribosomal protein S10</fullName>
    </alternativeName>
</protein>